<proteinExistence type="inferred from homology"/>
<comment type="induction">
    <text evidence="1">Expressed in the late phase of the viral replicative cycle.</text>
</comment>
<comment type="similarity">
    <text evidence="1">Belongs to the asfivirus B354L family.</text>
</comment>
<organismHost>
    <name type="scientific">Ornithodoros</name>
    <name type="common">relapsing fever ticks</name>
    <dbReference type="NCBI Taxonomy" id="6937"/>
</organismHost>
<organismHost>
    <name type="scientific">Phacochoerus aethiopicus</name>
    <name type="common">Warthog</name>
    <dbReference type="NCBI Taxonomy" id="85517"/>
</organismHost>
<organismHost>
    <name type="scientific">Phacochoerus africanus</name>
    <name type="common">Warthog</name>
    <dbReference type="NCBI Taxonomy" id="41426"/>
</organismHost>
<organismHost>
    <name type="scientific">Potamochoerus larvatus</name>
    <name type="common">Bushpig</name>
    <dbReference type="NCBI Taxonomy" id="273792"/>
</organismHost>
<organismHost>
    <name type="scientific">Sus scrofa</name>
    <name type="common">Pig</name>
    <dbReference type="NCBI Taxonomy" id="9823"/>
</organismHost>
<name>VF354_ASFWA</name>
<sequence>MALTTHSGKLIPELQFKAHHFIDKTTVLYGPSKTGKTVYVKHIMKILQPHIEQILVVAPSEPSNRSYEGFVHPTLIHYRLWLADKQKKNDNKGAERFLEAIWQRQTMMSSIYSRVNNIDMLKTLYHKLPIDIQQKENKNIAKVECLKAEQTDQKKEEKITSLYQQLLKKIIIQNIHMYKNLCLTENEKFTLNYINLNPRLLLILDDCAAELHPLFTKEIFKKFFYQNRHCFISMIICCQDDTDLPANLRKNAFVSIFTNASICMSNFSRQSNRYSKQDKEYVEEISHIVFKGYRKLVYIREDENRQHFYHSTVPLPTAFSFGSKALLKLCKAVYSKEVVIDKSNPYWSKFRLNF</sequence>
<organism>
    <name type="scientific">African swine fever virus (isolate Warthog/Namibia/Wart80/1980)</name>
    <name type="common">ASFV</name>
    <dbReference type="NCBI Taxonomy" id="561444"/>
    <lineage>
        <taxon>Viruses</taxon>
        <taxon>Varidnaviria</taxon>
        <taxon>Bamfordvirae</taxon>
        <taxon>Nucleocytoviricota</taxon>
        <taxon>Pokkesviricetes</taxon>
        <taxon>Asfuvirales</taxon>
        <taxon>Asfarviridae</taxon>
        <taxon>Asfivirus</taxon>
        <taxon>African swine fever virus</taxon>
    </lineage>
</organism>
<dbReference type="EMBL" id="AY261366">
    <property type="status" value="NOT_ANNOTATED_CDS"/>
    <property type="molecule type" value="Genomic_DNA"/>
</dbReference>
<dbReference type="Proteomes" id="UP000000858">
    <property type="component" value="Segment"/>
</dbReference>
<dbReference type="InterPro" id="IPR027417">
    <property type="entry name" value="P-loop_NTPase"/>
</dbReference>
<dbReference type="SUPFAM" id="SSF52540">
    <property type="entry name" value="P-loop containing nucleoside triphosphate hydrolases"/>
    <property type="match status" value="2"/>
</dbReference>
<protein>
    <recommendedName>
        <fullName>Uncharacterized protein B354L</fullName>
        <shortName>pB354L</shortName>
    </recommendedName>
</protein>
<keyword id="KW-0426">Late protein</keyword>
<feature type="chain" id="PRO_0000373665" description="Uncharacterized protein B354L">
    <location>
        <begin position="1"/>
        <end position="354"/>
    </location>
</feature>
<gene>
    <name type="ordered locus">War-088</name>
</gene>
<evidence type="ECO:0000305" key="1"/>
<accession>P0CAF5</accession>
<reference key="1">
    <citation type="submission" date="2003-03" db="EMBL/GenBank/DDBJ databases">
        <title>African swine fever virus genomes.</title>
        <authorList>
            <person name="Kutish G.F."/>
            <person name="Rock D.L."/>
        </authorList>
    </citation>
    <scope>NUCLEOTIDE SEQUENCE [LARGE SCALE GENOMIC DNA]</scope>
</reference>